<proteinExistence type="predicted"/>
<sequence length="203" mass="20688">MAGKSSNGDGVKFADDAGSGNSIDGIAIIDPGTVTSASGGSGSDAGSGDSGNTPRKRGRPAGSGTGAKRGRPAGNSAAKKVPGNLGVEKILFSLHLMASSALKVEELALDEKEAEALAGAVQEVASHYDITPDPKIMAWAGLFGVCASIYGPRVAAYKMRAAAEKRDKKEAAKPMAQKVQEAKPTEHDPAAPYIEQLPVSNTL</sequence>
<evidence type="ECO:0000256" key="1">
    <source>
        <dbReference type="SAM" id="MobiDB-lite"/>
    </source>
</evidence>
<keyword id="KW-1185">Reference proteome</keyword>
<keyword id="KW-0118">Viral capsid assembly</keyword>
<keyword id="KW-1188">Viral release from host cell</keyword>
<comment type="function">
    <text>Assembly protein. The major coat protein P3 and two assembly factors (P10 and P17) are needed during the assembly of the virus particle inside the host cell, when the capsid protein multimers are capable of enclosing the host-derived membrane, containing the virus-encoded membrane-associated proteins.</text>
</comment>
<organismHost>
    <name type="scientific">Acinetobacter calcoaceticus</name>
    <dbReference type="NCBI Taxonomy" id="471"/>
</organismHost>
<organismHost>
    <name type="scientific">Escherichia coli</name>
    <dbReference type="NCBI Taxonomy" id="562"/>
</organismHost>
<organismHost>
    <name type="scientific">Proteus mirabilis</name>
    <dbReference type="NCBI Taxonomy" id="584"/>
</organismHost>
<organismHost>
    <name type="scientific">Pseudomonas aeruginosa</name>
    <dbReference type="NCBI Taxonomy" id="287"/>
</organismHost>
<organismHost>
    <name type="scientific">Pseudomonas fluorescens</name>
    <dbReference type="NCBI Taxonomy" id="294"/>
</organismHost>
<organismHost>
    <name type="scientific">Pseudomonas putida</name>
    <name type="common">Arthrobacter siderocapsulatus</name>
    <dbReference type="NCBI Taxonomy" id="303"/>
</organismHost>
<organismHost>
    <name type="scientific">Salmonella typhimurium</name>
    <dbReference type="NCBI Taxonomy" id="90371"/>
</organismHost>
<organismHost>
    <name type="scientific">Vibrio cholerae</name>
    <dbReference type="NCBI Taxonomy" id="666"/>
</organismHost>
<accession>P28732</accession>
<accession>Q3T4N6</accession>
<protein>
    <recommendedName>
        <fullName>Protein P10</fullName>
    </recommendedName>
</protein>
<gene>
    <name type="primary">X</name>
</gene>
<reference key="1">
    <citation type="journal article" date="1991" name="Virology">
        <title>Genome organization of membrane-containing bacteriophage PRD1.</title>
        <authorList>
            <person name="Bamford J.K.H."/>
            <person name="Haenninen A.-L."/>
            <person name="Pakula T.M."/>
            <person name="Ojala P.M."/>
            <person name="Kalkkinen N."/>
            <person name="Frilander M."/>
            <person name="Bamford D.H."/>
        </authorList>
    </citation>
    <scope>NUCLEOTIDE SEQUENCE [GENOMIC DNA]</scope>
</reference>
<reference key="2">
    <citation type="journal article" date="2005" name="J. Mol. Biol.">
        <title>A snapshot of viral evolution from genome analysis of the tectiviridae family.</title>
        <authorList>
            <person name="Saren A.M."/>
            <person name="Ravantti J.J."/>
            <person name="Benson S.D."/>
            <person name="Burnett R.M."/>
            <person name="Paulin L."/>
            <person name="Bamford D.H."/>
            <person name="Bamford J.K.H."/>
        </authorList>
    </citation>
    <scope>NUCLEOTIDE SEQUENCE [GENOMIC DNA]</scope>
</reference>
<name>VP10_BPPRD</name>
<organism>
    <name type="scientific">Enterobacteria phage PRD1</name>
    <name type="common">Bacteriophage PRD1</name>
    <dbReference type="NCBI Taxonomy" id="10658"/>
    <lineage>
        <taxon>Viruses</taxon>
        <taxon>Varidnaviria</taxon>
        <taxon>Bamfordvirae</taxon>
        <taxon>Preplasmiviricota</taxon>
        <taxon>Tectiliviricetes</taxon>
        <taxon>Kalamavirales</taxon>
        <taxon>Tectiviridae</taxon>
        <taxon>Alphatectivirus</taxon>
        <taxon>Alphatectivirus PRD1</taxon>
    </lineage>
</organism>
<feature type="chain" id="PRO_0000165352" description="Protein P10">
    <location>
        <begin position="1"/>
        <end position="203"/>
    </location>
</feature>
<feature type="region of interest" description="Disordered" evidence="1">
    <location>
        <begin position="1"/>
        <end position="80"/>
    </location>
</feature>
<feature type="region of interest" description="Disordered" evidence="1">
    <location>
        <begin position="166"/>
        <end position="203"/>
    </location>
</feature>
<feature type="compositionally biased region" description="Gly residues" evidence="1">
    <location>
        <begin position="39"/>
        <end position="49"/>
    </location>
</feature>
<feature type="compositionally biased region" description="Basic and acidic residues" evidence="1">
    <location>
        <begin position="180"/>
        <end position="189"/>
    </location>
</feature>
<dbReference type="EMBL" id="AY848689">
    <property type="protein sequence ID" value="AAX45904.1"/>
    <property type="molecule type" value="Genomic_DNA"/>
</dbReference>
<dbReference type="PIR" id="E36777">
    <property type="entry name" value="WMBPTB"/>
</dbReference>
<dbReference type="RefSeq" id="YP_001542609.1">
    <property type="nucleotide sequence ID" value="NC_001421.2"/>
</dbReference>
<dbReference type="RefSeq" id="YP_009639964.1">
    <property type="nucleotide sequence ID" value="NC_001421.2"/>
</dbReference>
<dbReference type="GeneID" id="5729509"/>
<dbReference type="OrthoDB" id="31202at10239"/>
<dbReference type="Proteomes" id="UP000002143">
    <property type="component" value="Segment"/>
</dbReference>